<keyword id="KW-0067">ATP-binding</keyword>
<keyword id="KW-0418">Kinase</keyword>
<keyword id="KW-0441">Lipid A biosynthesis</keyword>
<keyword id="KW-0444">Lipid biosynthesis</keyword>
<keyword id="KW-0443">Lipid metabolism</keyword>
<keyword id="KW-0547">Nucleotide-binding</keyword>
<keyword id="KW-1185">Reference proteome</keyword>
<keyword id="KW-0808">Transferase</keyword>
<protein>
    <recommendedName>
        <fullName evidence="1">Tetraacyldisaccharide 4'-kinase</fullName>
        <ecNumber evidence="1">2.7.1.130</ecNumber>
    </recommendedName>
    <alternativeName>
        <fullName evidence="1">Lipid A 4'-kinase</fullName>
    </alternativeName>
</protein>
<organism>
    <name type="scientific">Rhizobium leguminosarum bv. trifolii (strain WSM2304)</name>
    <dbReference type="NCBI Taxonomy" id="395492"/>
    <lineage>
        <taxon>Bacteria</taxon>
        <taxon>Pseudomonadati</taxon>
        <taxon>Pseudomonadota</taxon>
        <taxon>Alphaproteobacteria</taxon>
        <taxon>Hyphomicrobiales</taxon>
        <taxon>Rhizobiaceae</taxon>
        <taxon>Rhizobium/Agrobacterium group</taxon>
        <taxon>Rhizobium</taxon>
    </lineage>
</organism>
<comment type="function">
    <text evidence="1">Transfers the gamma-phosphate of ATP to the 4'-position of a tetraacyldisaccharide 1-phosphate intermediate (termed DS-1-P) to form tetraacyldisaccharide 1,4'-bis-phosphate (lipid IVA).</text>
</comment>
<comment type="catalytic activity">
    <reaction evidence="1">
        <text>a lipid A disaccharide + ATP = a lipid IVA + ADP + H(+)</text>
        <dbReference type="Rhea" id="RHEA:67840"/>
        <dbReference type="ChEBI" id="CHEBI:15378"/>
        <dbReference type="ChEBI" id="CHEBI:30616"/>
        <dbReference type="ChEBI" id="CHEBI:176343"/>
        <dbReference type="ChEBI" id="CHEBI:176425"/>
        <dbReference type="ChEBI" id="CHEBI:456216"/>
        <dbReference type="EC" id="2.7.1.130"/>
    </reaction>
</comment>
<comment type="pathway">
    <text evidence="1">Glycolipid biosynthesis; lipid IV(A) biosynthesis; lipid IV(A) from (3R)-3-hydroxytetradecanoyl-[acyl-carrier-protein] and UDP-N-acetyl-alpha-D-glucosamine: step 6/6.</text>
</comment>
<comment type="similarity">
    <text evidence="1">Belongs to the LpxK family.</text>
</comment>
<reference key="1">
    <citation type="journal article" date="2010" name="Stand. Genomic Sci.">
        <title>Complete genome sequence of Rhizobium leguminosarum bv trifolii strain WSM2304, an effective microsymbiont of the South American clover Trifolium polymorphum.</title>
        <authorList>
            <person name="Reeve W."/>
            <person name="O'Hara G."/>
            <person name="Chain P."/>
            <person name="Ardley J."/>
            <person name="Brau L."/>
            <person name="Nandesena K."/>
            <person name="Tiwari R."/>
            <person name="Malfatti S."/>
            <person name="Kiss H."/>
            <person name="Lapidus A."/>
            <person name="Copeland A."/>
            <person name="Nolan M."/>
            <person name="Land M."/>
            <person name="Ivanova N."/>
            <person name="Mavromatis K."/>
            <person name="Markowitz V."/>
            <person name="Kyrpides N."/>
            <person name="Melino V."/>
            <person name="Denton M."/>
            <person name="Yates R."/>
            <person name="Howieson J."/>
        </authorList>
    </citation>
    <scope>NUCLEOTIDE SEQUENCE [LARGE SCALE GENOMIC DNA]</scope>
    <source>
        <strain>WSM2304</strain>
    </source>
</reference>
<sequence length="357" mass="38412">MISEAPPFWWRKADWRAWLLLPVSFLYGRIAGHRMAHGRRASVAIPVICVGNFTVGGAGKTPTALTIARAAKAKGLKPGFLSRGYGGSLDVTTVVDPDHHRAVAVGDEPLLLAREALTVISRRRVDGAQRLVAEGADLIIMDDGFQSARLAIDYALLVIDATRGLGNGHIVPAGPVRAPIRQQLRSATALLKVGGGNAADRIVRMAARAAKPYFTASLKVRGDNTLAGMKVLAFAGIADPAKFFRTVESRGAEITVAKSFGDHEHLTEDEIDDILTTAERQDLLIVTTSKDFVRLSGHPGKAAQLAEKCRVIEVDMVFEDHLAPSLIIDRAIVACRERRLREMKAGIKAMPGKAGPL</sequence>
<proteinExistence type="inferred from homology"/>
<evidence type="ECO:0000255" key="1">
    <source>
        <dbReference type="HAMAP-Rule" id="MF_00409"/>
    </source>
</evidence>
<feature type="chain" id="PRO_1000123732" description="Tetraacyldisaccharide 4'-kinase">
    <location>
        <begin position="1"/>
        <end position="357"/>
    </location>
</feature>
<feature type="binding site" evidence="1">
    <location>
        <begin position="54"/>
        <end position="61"/>
    </location>
    <ligand>
        <name>ATP</name>
        <dbReference type="ChEBI" id="CHEBI:30616"/>
    </ligand>
</feature>
<dbReference type="EC" id="2.7.1.130" evidence="1"/>
<dbReference type="EMBL" id="CP001191">
    <property type="protein sequence ID" value="ACI53787.1"/>
    <property type="molecule type" value="Genomic_DNA"/>
</dbReference>
<dbReference type="RefSeq" id="WP_012556729.1">
    <property type="nucleotide sequence ID" value="NC_011369.1"/>
</dbReference>
<dbReference type="SMR" id="B5ZRZ4"/>
<dbReference type="STRING" id="395492.Rleg2_0490"/>
<dbReference type="KEGG" id="rlt:Rleg2_0490"/>
<dbReference type="eggNOG" id="COG1663">
    <property type="taxonomic scope" value="Bacteria"/>
</dbReference>
<dbReference type="HOGENOM" id="CLU_038816_0_0_5"/>
<dbReference type="UniPathway" id="UPA00359">
    <property type="reaction ID" value="UER00482"/>
</dbReference>
<dbReference type="Proteomes" id="UP000008330">
    <property type="component" value="Chromosome"/>
</dbReference>
<dbReference type="GO" id="GO:0005886">
    <property type="term" value="C:plasma membrane"/>
    <property type="evidence" value="ECO:0007669"/>
    <property type="project" value="TreeGrafter"/>
</dbReference>
<dbReference type="GO" id="GO:0005524">
    <property type="term" value="F:ATP binding"/>
    <property type="evidence" value="ECO:0007669"/>
    <property type="project" value="UniProtKB-UniRule"/>
</dbReference>
<dbReference type="GO" id="GO:0009029">
    <property type="term" value="F:tetraacyldisaccharide 4'-kinase activity"/>
    <property type="evidence" value="ECO:0007669"/>
    <property type="project" value="UniProtKB-UniRule"/>
</dbReference>
<dbReference type="GO" id="GO:0009245">
    <property type="term" value="P:lipid A biosynthetic process"/>
    <property type="evidence" value="ECO:0007669"/>
    <property type="project" value="UniProtKB-UniRule"/>
</dbReference>
<dbReference type="GO" id="GO:0009244">
    <property type="term" value="P:lipopolysaccharide core region biosynthetic process"/>
    <property type="evidence" value="ECO:0007669"/>
    <property type="project" value="TreeGrafter"/>
</dbReference>
<dbReference type="HAMAP" id="MF_00409">
    <property type="entry name" value="LpxK"/>
    <property type="match status" value="1"/>
</dbReference>
<dbReference type="InterPro" id="IPR003758">
    <property type="entry name" value="LpxK"/>
</dbReference>
<dbReference type="InterPro" id="IPR027417">
    <property type="entry name" value="P-loop_NTPase"/>
</dbReference>
<dbReference type="NCBIfam" id="TIGR00682">
    <property type="entry name" value="lpxK"/>
    <property type="match status" value="1"/>
</dbReference>
<dbReference type="PANTHER" id="PTHR42724">
    <property type="entry name" value="TETRAACYLDISACCHARIDE 4'-KINASE"/>
    <property type="match status" value="1"/>
</dbReference>
<dbReference type="PANTHER" id="PTHR42724:SF1">
    <property type="entry name" value="TETRAACYLDISACCHARIDE 4'-KINASE, MITOCHONDRIAL-RELATED"/>
    <property type="match status" value="1"/>
</dbReference>
<dbReference type="Pfam" id="PF02606">
    <property type="entry name" value="LpxK"/>
    <property type="match status" value="1"/>
</dbReference>
<dbReference type="SUPFAM" id="SSF52540">
    <property type="entry name" value="P-loop containing nucleoside triphosphate hydrolases"/>
    <property type="match status" value="1"/>
</dbReference>
<accession>B5ZRZ4</accession>
<gene>
    <name evidence="1" type="primary">lpxK</name>
    <name type="ordered locus">Rleg2_0490</name>
</gene>
<name>LPXK_RHILW</name>